<feature type="chain" id="PRO_1000098013" description="ATP-dependent Clp protease ATP-binding subunit ClpX">
    <location>
        <begin position="1"/>
        <end position="399"/>
    </location>
</feature>
<feature type="domain" description="ClpX-type ZB" evidence="2">
    <location>
        <begin position="1"/>
        <end position="51"/>
    </location>
</feature>
<feature type="binding site" evidence="2">
    <location>
        <position position="8"/>
    </location>
    <ligand>
        <name>Zn(2+)</name>
        <dbReference type="ChEBI" id="CHEBI:29105"/>
    </ligand>
</feature>
<feature type="binding site" evidence="2">
    <location>
        <position position="11"/>
    </location>
    <ligand>
        <name>Zn(2+)</name>
        <dbReference type="ChEBI" id="CHEBI:29105"/>
    </ligand>
</feature>
<feature type="binding site" evidence="2">
    <location>
        <position position="32"/>
    </location>
    <ligand>
        <name>Zn(2+)</name>
        <dbReference type="ChEBI" id="CHEBI:29105"/>
    </ligand>
</feature>
<feature type="binding site" evidence="2">
    <location>
        <position position="35"/>
    </location>
    <ligand>
        <name>Zn(2+)</name>
        <dbReference type="ChEBI" id="CHEBI:29105"/>
    </ligand>
</feature>
<feature type="binding site" evidence="1">
    <location>
        <begin position="109"/>
        <end position="116"/>
    </location>
    <ligand>
        <name>ATP</name>
        <dbReference type="ChEBI" id="CHEBI:30616"/>
    </ligand>
</feature>
<organism>
    <name type="scientific">Thermus thermophilus (strain ATCC 27634 / DSM 579 / HB8)</name>
    <dbReference type="NCBI Taxonomy" id="300852"/>
    <lineage>
        <taxon>Bacteria</taxon>
        <taxon>Thermotogati</taxon>
        <taxon>Deinococcota</taxon>
        <taxon>Deinococci</taxon>
        <taxon>Thermales</taxon>
        <taxon>Thermaceae</taxon>
        <taxon>Thermus</taxon>
    </lineage>
</organism>
<dbReference type="EMBL" id="AP008226">
    <property type="protein sequence ID" value="BAD70439.1"/>
    <property type="molecule type" value="Genomic_DNA"/>
</dbReference>
<dbReference type="RefSeq" id="WP_011228071.1">
    <property type="nucleotide sequence ID" value="NC_006461.1"/>
</dbReference>
<dbReference type="RefSeq" id="YP_143882.1">
    <property type="nucleotide sequence ID" value="NC_006461.1"/>
</dbReference>
<dbReference type="SMR" id="Q5SKM7"/>
<dbReference type="EnsemblBacteria" id="BAD70439">
    <property type="protein sequence ID" value="BAD70439"/>
    <property type="gene ID" value="BAD70439"/>
</dbReference>
<dbReference type="GeneID" id="3168018"/>
<dbReference type="KEGG" id="ttj:TTHA0616"/>
<dbReference type="PATRIC" id="fig|300852.9.peg.614"/>
<dbReference type="eggNOG" id="COG1219">
    <property type="taxonomic scope" value="Bacteria"/>
</dbReference>
<dbReference type="HOGENOM" id="CLU_014218_8_2_0"/>
<dbReference type="PhylomeDB" id="Q5SKM7"/>
<dbReference type="Proteomes" id="UP000000532">
    <property type="component" value="Chromosome"/>
</dbReference>
<dbReference type="GO" id="GO:0009376">
    <property type="term" value="C:HslUV protease complex"/>
    <property type="evidence" value="ECO:0007669"/>
    <property type="project" value="TreeGrafter"/>
</dbReference>
<dbReference type="GO" id="GO:0005524">
    <property type="term" value="F:ATP binding"/>
    <property type="evidence" value="ECO:0007669"/>
    <property type="project" value="UniProtKB-UniRule"/>
</dbReference>
<dbReference type="GO" id="GO:0016887">
    <property type="term" value="F:ATP hydrolysis activity"/>
    <property type="evidence" value="ECO:0007669"/>
    <property type="project" value="InterPro"/>
</dbReference>
<dbReference type="GO" id="GO:0140662">
    <property type="term" value="F:ATP-dependent protein folding chaperone"/>
    <property type="evidence" value="ECO:0007669"/>
    <property type="project" value="InterPro"/>
</dbReference>
<dbReference type="GO" id="GO:0046983">
    <property type="term" value="F:protein dimerization activity"/>
    <property type="evidence" value="ECO:0007669"/>
    <property type="project" value="InterPro"/>
</dbReference>
<dbReference type="GO" id="GO:0051082">
    <property type="term" value="F:unfolded protein binding"/>
    <property type="evidence" value="ECO:0007669"/>
    <property type="project" value="UniProtKB-UniRule"/>
</dbReference>
<dbReference type="GO" id="GO:0008270">
    <property type="term" value="F:zinc ion binding"/>
    <property type="evidence" value="ECO:0007669"/>
    <property type="project" value="InterPro"/>
</dbReference>
<dbReference type="GO" id="GO:0051301">
    <property type="term" value="P:cell division"/>
    <property type="evidence" value="ECO:0007669"/>
    <property type="project" value="TreeGrafter"/>
</dbReference>
<dbReference type="GO" id="GO:0051603">
    <property type="term" value="P:proteolysis involved in protein catabolic process"/>
    <property type="evidence" value="ECO:0007669"/>
    <property type="project" value="TreeGrafter"/>
</dbReference>
<dbReference type="CDD" id="cd19497">
    <property type="entry name" value="RecA-like_ClpX"/>
    <property type="match status" value="1"/>
</dbReference>
<dbReference type="FunFam" id="1.10.8.60:FF:000002">
    <property type="entry name" value="ATP-dependent Clp protease ATP-binding subunit ClpX"/>
    <property type="match status" value="1"/>
</dbReference>
<dbReference type="FunFam" id="3.40.50.300:FF:000005">
    <property type="entry name" value="ATP-dependent Clp protease ATP-binding subunit ClpX"/>
    <property type="match status" value="1"/>
</dbReference>
<dbReference type="Gene3D" id="1.10.8.60">
    <property type="match status" value="1"/>
</dbReference>
<dbReference type="Gene3D" id="6.20.220.10">
    <property type="entry name" value="ClpX chaperone, C4-type zinc finger domain"/>
    <property type="match status" value="1"/>
</dbReference>
<dbReference type="Gene3D" id="3.40.50.300">
    <property type="entry name" value="P-loop containing nucleotide triphosphate hydrolases"/>
    <property type="match status" value="1"/>
</dbReference>
<dbReference type="HAMAP" id="MF_00175">
    <property type="entry name" value="ClpX"/>
    <property type="match status" value="1"/>
</dbReference>
<dbReference type="InterPro" id="IPR003593">
    <property type="entry name" value="AAA+_ATPase"/>
</dbReference>
<dbReference type="InterPro" id="IPR050052">
    <property type="entry name" value="ATP-dep_Clp_protease_ClpX"/>
</dbReference>
<dbReference type="InterPro" id="IPR003959">
    <property type="entry name" value="ATPase_AAA_core"/>
</dbReference>
<dbReference type="InterPro" id="IPR019489">
    <property type="entry name" value="Clp_ATPase_C"/>
</dbReference>
<dbReference type="InterPro" id="IPR004487">
    <property type="entry name" value="Clp_protease_ATP-bd_su_ClpX"/>
</dbReference>
<dbReference type="InterPro" id="IPR046425">
    <property type="entry name" value="ClpX_bact"/>
</dbReference>
<dbReference type="InterPro" id="IPR027417">
    <property type="entry name" value="P-loop_NTPase"/>
</dbReference>
<dbReference type="InterPro" id="IPR010603">
    <property type="entry name" value="Znf_CppX_C4"/>
</dbReference>
<dbReference type="InterPro" id="IPR038366">
    <property type="entry name" value="Znf_CppX_C4_sf"/>
</dbReference>
<dbReference type="NCBIfam" id="TIGR00382">
    <property type="entry name" value="clpX"/>
    <property type="match status" value="1"/>
</dbReference>
<dbReference type="NCBIfam" id="NF003745">
    <property type="entry name" value="PRK05342.1"/>
    <property type="match status" value="1"/>
</dbReference>
<dbReference type="PANTHER" id="PTHR48102:SF7">
    <property type="entry name" value="ATP-DEPENDENT CLP PROTEASE ATP-BINDING SUBUNIT CLPX-LIKE, MITOCHONDRIAL"/>
    <property type="match status" value="1"/>
</dbReference>
<dbReference type="PANTHER" id="PTHR48102">
    <property type="entry name" value="ATP-DEPENDENT CLP PROTEASE ATP-BINDING SUBUNIT CLPX-LIKE, MITOCHONDRIAL-RELATED"/>
    <property type="match status" value="1"/>
</dbReference>
<dbReference type="Pfam" id="PF07724">
    <property type="entry name" value="AAA_2"/>
    <property type="match status" value="1"/>
</dbReference>
<dbReference type="Pfam" id="PF10431">
    <property type="entry name" value="ClpB_D2-small"/>
    <property type="match status" value="1"/>
</dbReference>
<dbReference type="Pfam" id="PF06689">
    <property type="entry name" value="zf-C4_ClpX"/>
    <property type="match status" value="1"/>
</dbReference>
<dbReference type="SMART" id="SM00382">
    <property type="entry name" value="AAA"/>
    <property type="match status" value="1"/>
</dbReference>
<dbReference type="SMART" id="SM01086">
    <property type="entry name" value="ClpB_D2-small"/>
    <property type="match status" value="1"/>
</dbReference>
<dbReference type="SMART" id="SM00994">
    <property type="entry name" value="zf-C4_ClpX"/>
    <property type="match status" value="1"/>
</dbReference>
<dbReference type="SUPFAM" id="SSF57716">
    <property type="entry name" value="Glucocorticoid receptor-like (DNA-binding domain)"/>
    <property type="match status" value="1"/>
</dbReference>
<dbReference type="SUPFAM" id="SSF52540">
    <property type="entry name" value="P-loop containing nucleoside triphosphate hydrolases"/>
    <property type="match status" value="1"/>
</dbReference>
<dbReference type="PROSITE" id="PS51902">
    <property type="entry name" value="CLPX_ZB"/>
    <property type="match status" value="1"/>
</dbReference>
<accession>Q5SKM7</accession>
<evidence type="ECO:0000255" key="1">
    <source>
        <dbReference type="HAMAP-Rule" id="MF_00175"/>
    </source>
</evidence>
<evidence type="ECO:0000255" key="2">
    <source>
        <dbReference type="PROSITE-ProRule" id="PRU01250"/>
    </source>
</evidence>
<name>CLPX_THET8</name>
<proteinExistence type="inferred from homology"/>
<protein>
    <recommendedName>
        <fullName evidence="1">ATP-dependent Clp protease ATP-binding subunit ClpX</fullName>
    </recommendedName>
</protein>
<sequence length="399" mass="44435">MKRPRPHCSFCGLRPPETGRLLESPLEDVYICEDCVERAQEILAQEERRAPKGPSRLPRPQEIKAHLDQYVVGQEAAKRALSVAVYNHYKRLLHPEAEIGKANILLIGPTGTGKTLLAETLARFLDVPFAIADATTLTEAGYVGEDVENVLLRLLQNADFDVERAEMGIVYIDEIDKIARKSENPSLTRDVSGEGVQQALLKIIEGTVANVPPQGGRKHPHQEFIPVNTKNILFILGGAFEGLENIVKARVGKTTIGFTGGRREREEPLEVIPEDLIKFGMIPEFVGRAPLIVQLHPLTEDDLVRILTEPKNALVKQYQELFRMEGIELRFTQAALKEVARRALKRGTGARGLRAILEKAMVDLMFEAPGSGVREIVFDLPHLDHPLKALEEARLRQAS</sequence>
<gene>
    <name evidence="1" type="primary">clpX</name>
    <name type="ordered locus">TTHA0616</name>
</gene>
<reference key="1">
    <citation type="submission" date="2004-11" db="EMBL/GenBank/DDBJ databases">
        <title>Complete genome sequence of Thermus thermophilus HB8.</title>
        <authorList>
            <person name="Masui R."/>
            <person name="Kurokawa K."/>
            <person name="Nakagawa N."/>
            <person name="Tokunaga F."/>
            <person name="Koyama Y."/>
            <person name="Shibata T."/>
            <person name="Oshima T."/>
            <person name="Yokoyama S."/>
            <person name="Yasunaga T."/>
            <person name="Kuramitsu S."/>
        </authorList>
    </citation>
    <scope>NUCLEOTIDE SEQUENCE [LARGE SCALE GENOMIC DNA]</scope>
    <source>
        <strain>ATCC 27634 / DSM 579 / HB8</strain>
    </source>
</reference>
<keyword id="KW-0067">ATP-binding</keyword>
<keyword id="KW-0143">Chaperone</keyword>
<keyword id="KW-0479">Metal-binding</keyword>
<keyword id="KW-0547">Nucleotide-binding</keyword>
<keyword id="KW-1185">Reference proteome</keyword>
<keyword id="KW-0862">Zinc</keyword>
<comment type="function">
    <text evidence="1">ATP-dependent specificity component of the Clp protease. It directs the protease to specific substrates. Can perform chaperone functions in the absence of ClpP.</text>
</comment>
<comment type="subunit">
    <text evidence="1">Component of the ClpX-ClpP complex. Forms a hexameric ring that, in the presence of ATP, binds to fourteen ClpP subunits assembled into a disk-like structure with a central cavity, resembling the structure of eukaryotic proteasomes.</text>
</comment>
<comment type="similarity">
    <text evidence="1">Belongs to the ClpX chaperone family.</text>
</comment>